<evidence type="ECO:0000255" key="1">
    <source>
        <dbReference type="HAMAP-Rule" id="MF_00358"/>
    </source>
</evidence>
<evidence type="ECO:0000256" key="2">
    <source>
        <dbReference type="SAM" id="MobiDB-lite"/>
    </source>
</evidence>
<evidence type="ECO:0000305" key="3"/>
<name>RS21_THEP3</name>
<reference key="1">
    <citation type="submission" date="2008-01" db="EMBL/GenBank/DDBJ databases">
        <title>Complete sequence of Thermoanaerobacter pseudethanolicus 39E.</title>
        <authorList>
            <person name="Copeland A."/>
            <person name="Lucas S."/>
            <person name="Lapidus A."/>
            <person name="Barry K."/>
            <person name="Glavina del Rio T."/>
            <person name="Dalin E."/>
            <person name="Tice H."/>
            <person name="Pitluck S."/>
            <person name="Bruce D."/>
            <person name="Goodwin L."/>
            <person name="Saunders E."/>
            <person name="Brettin T."/>
            <person name="Detter J.C."/>
            <person name="Han C."/>
            <person name="Schmutz J."/>
            <person name="Larimer F."/>
            <person name="Land M."/>
            <person name="Hauser L."/>
            <person name="Kyrpides N."/>
            <person name="Lykidis A."/>
            <person name="Hemme C."/>
            <person name="Fields M.W."/>
            <person name="He Z."/>
            <person name="Zhou J."/>
            <person name="Richardson P."/>
        </authorList>
    </citation>
    <scope>NUCLEOTIDE SEQUENCE [LARGE SCALE GENOMIC DNA]</scope>
    <source>
        <strain>ATCC 33223 / DSM 2355 / 39E</strain>
    </source>
</reference>
<gene>
    <name evidence="1" type="primary">rpsU</name>
    <name type="ordered locus">Teth39_1374</name>
</gene>
<feature type="chain" id="PRO_1000120672" description="Small ribosomal subunit protein bS21">
    <location>
        <begin position="1"/>
        <end position="61"/>
    </location>
</feature>
<feature type="region of interest" description="Disordered" evidence="2">
    <location>
        <begin position="34"/>
        <end position="61"/>
    </location>
</feature>
<feature type="compositionally biased region" description="Basic residues" evidence="2">
    <location>
        <begin position="43"/>
        <end position="61"/>
    </location>
</feature>
<protein>
    <recommendedName>
        <fullName evidence="1">Small ribosomal subunit protein bS21</fullName>
    </recommendedName>
    <alternativeName>
        <fullName evidence="3">30S ribosomal protein S21</fullName>
    </alternativeName>
</protein>
<proteinExistence type="inferred from homology"/>
<sequence>MAEVRVGENESLDNALRRFRRQCSKAGVLSEVRKREHYESPSVKRKKKSEAARKRKYKYNK</sequence>
<keyword id="KW-1185">Reference proteome</keyword>
<keyword id="KW-0687">Ribonucleoprotein</keyword>
<keyword id="KW-0689">Ribosomal protein</keyword>
<dbReference type="EMBL" id="CP000924">
    <property type="protein sequence ID" value="ABY95026.1"/>
    <property type="molecule type" value="Genomic_DNA"/>
</dbReference>
<dbReference type="RefSeq" id="WP_003867924.1">
    <property type="nucleotide sequence ID" value="NC_010321.1"/>
</dbReference>
<dbReference type="SMR" id="B0KA63"/>
<dbReference type="STRING" id="340099.Teth39_1374"/>
<dbReference type="KEGG" id="tpd:Teth39_1374"/>
<dbReference type="eggNOG" id="COG0828">
    <property type="taxonomic scope" value="Bacteria"/>
</dbReference>
<dbReference type="HOGENOM" id="CLU_159258_1_2_9"/>
<dbReference type="Proteomes" id="UP000002156">
    <property type="component" value="Chromosome"/>
</dbReference>
<dbReference type="GO" id="GO:1990904">
    <property type="term" value="C:ribonucleoprotein complex"/>
    <property type="evidence" value="ECO:0007669"/>
    <property type="project" value="UniProtKB-KW"/>
</dbReference>
<dbReference type="GO" id="GO:0005840">
    <property type="term" value="C:ribosome"/>
    <property type="evidence" value="ECO:0007669"/>
    <property type="project" value="UniProtKB-KW"/>
</dbReference>
<dbReference type="GO" id="GO:0003735">
    <property type="term" value="F:structural constituent of ribosome"/>
    <property type="evidence" value="ECO:0007669"/>
    <property type="project" value="InterPro"/>
</dbReference>
<dbReference type="GO" id="GO:0006412">
    <property type="term" value="P:translation"/>
    <property type="evidence" value="ECO:0007669"/>
    <property type="project" value="UniProtKB-UniRule"/>
</dbReference>
<dbReference type="Gene3D" id="1.20.5.1150">
    <property type="entry name" value="Ribosomal protein S8"/>
    <property type="match status" value="1"/>
</dbReference>
<dbReference type="HAMAP" id="MF_00358">
    <property type="entry name" value="Ribosomal_bS21"/>
    <property type="match status" value="1"/>
</dbReference>
<dbReference type="InterPro" id="IPR001911">
    <property type="entry name" value="Ribosomal_bS21"/>
</dbReference>
<dbReference type="InterPro" id="IPR038380">
    <property type="entry name" value="Ribosomal_bS21_sf"/>
</dbReference>
<dbReference type="NCBIfam" id="TIGR00030">
    <property type="entry name" value="S21p"/>
    <property type="match status" value="1"/>
</dbReference>
<dbReference type="PANTHER" id="PTHR21109">
    <property type="entry name" value="MITOCHONDRIAL 28S RIBOSOMAL PROTEIN S21"/>
    <property type="match status" value="1"/>
</dbReference>
<dbReference type="PANTHER" id="PTHR21109:SF22">
    <property type="entry name" value="SMALL RIBOSOMAL SUBUNIT PROTEIN BS21"/>
    <property type="match status" value="1"/>
</dbReference>
<dbReference type="Pfam" id="PF01165">
    <property type="entry name" value="Ribosomal_S21"/>
    <property type="match status" value="1"/>
</dbReference>
<dbReference type="PRINTS" id="PR00976">
    <property type="entry name" value="RIBOSOMALS21"/>
</dbReference>
<comment type="similarity">
    <text evidence="1">Belongs to the bacterial ribosomal protein bS21 family.</text>
</comment>
<accession>B0KA63</accession>
<organism>
    <name type="scientific">Thermoanaerobacter pseudethanolicus (strain ATCC 33223 / 39E)</name>
    <name type="common">Clostridium thermohydrosulfuricum</name>
    <dbReference type="NCBI Taxonomy" id="340099"/>
    <lineage>
        <taxon>Bacteria</taxon>
        <taxon>Bacillati</taxon>
        <taxon>Bacillota</taxon>
        <taxon>Clostridia</taxon>
        <taxon>Thermoanaerobacterales</taxon>
        <taxon>Thermoanaerobacteraceae</taxon>
        <taxon>Thermoanaerobacter</taxon>
    </lineage>
</organism>